<organism>
    <name type="scientific">Rhizobium meliloti (strain 1021)</name>
    <name type="common">Ensifer meliloti</name>
    <name type="synonym">Sinorhizobium meliloti</name>
    <dbReference type="NCBI Taxonomy" id="266834"/>
    <lineage>
        <taxon>Bacteria</taxon>
        <taxon>Pseudomonadati</taxon>
        <taxon>Pseudomonadota</taxon>
        <taxon>Alphaproteobacteria</taxon>
        <taxon>Hyphomicrobiales</taxon>
        <taxon>Rhizobiaceae</taxon>
        <taxon>Sinorhizobium/Ensifer group</taxon>
        <taxon>Sinorhizobium</taxon>
    </lineage>
</organism>
<keyword id="KW-0238">DNA-binding</keyword>
<keyword id="KW-1185">Reference proteome</keyword>
<keyword id="KW-0804">Transcription</keyword>
<keyword id="KW-0805">Transcription regulation</keyword>
<protein>
    <recommendedName>
        <fullName>Uncharacterized HTH-type transcriptional regulator R00410</fullName>
    </recommendedName>
</protein>
<evidence type="ECO:0000255" key="1">
    <source>
        <dbReference type="PROSITE-ProRule" id="PRU00257"/>
    </source>
</evidence>
<name>Y410_RHIME</name>
<sequence length="139" mass="15209">MIENKKKPNPIDIHVGSRIRLRRTMLGMSQEKLGESLGITFQQIQKYEKGTNRVGASRLQNISQILNVPVSFFFEDAPGDGGGTGPGMAEASSSNYVVDFLSSSEGLQLNRAFVKISDPKVRRKLVDLVKALAAEAESE</sequence>
<reference key="1">
    <citation type="journal article" date="2001" name="Proc. Natl. Acad. Sci. U.S.A.">
        <title>Analysis of the chromosome sequence of the legume symbiont Sinorhizobium meliloti strain 1021.</title>
        <authorList>
            <person name="Capela D."/>
            <person name="Barloy-Hubler F."/>
            <person name="Gouzy J."/>
            <person name="Bothe G."/>
            <person name="Ampe F."/>
            <person name="Batut J."/>
            <person name="Boistard P."/>
            <person name="Becker A."/>
            <person name="Boutry M."/>
            <person name="Cadieu E."/>
            <person name="Dreano S."/>
            <person name="Gloux S."/>
            <person name="Godrie T."/>
            <person name="Goffeau A."/>
            <person name="Kahn D."/>
            <person name="Kiss E."/>
            <person name="Lelaure V."/>
            <person name="Masuy D."/>
            <person name="Pohl T."/>
            <person name="Portetelle D."/>
            <person name="Puehler A."/>
            <person name="Purnelle B."/>
            <person name="Ramsperger U."/>
            <person name="Renard C."/>
            <person name="Thebault P."/>
            <person name="Vandenbol M."/>
            <person name="Weidner S."/>
            <person name="Galibert F."/>
        </authorList>
    </citation>
    <scope>NUCLEOTIDE SEQUENCE [LARGE SCALE GENOMIC DNA]</scope>
    <source>
        <strain>1021</strain>
    </source>
</reference>
<reference key="2">
    <citation type="journal article" date="2001" name="Science">
        <title>The composite genome of the legume symbiont Sinorhizobium meliloti.</title>
        <authorList>
            <person name="Galibert F."/>
            <person name="Finan T.M."/>
            <person name="Long S.R."/>
            <person name="Puehler A."/>
            <person name="Abola P."/>
            <person name="Ampe F."/>
            <person name="Barloy-Hubler F."/>
            <person name="Barnett M.J."/>
            <person name="Becker A."/>
            <person name="Boistard P."/>
            <person name="Bothe G."/>
            <person name="Boutry M."/>
            <person name="Bowser L."/>
            <person name="Buhrmester J."/>
            <person name="Cadieu E."/>
            <person name="Capela D."/>
            <person name="Chain P."/>
            <person name="Cowie A."/>
            <person name="Davis R.W."/>
            <person name="Dreano S."/>
            <person name="Federspiel N.A."/>
            <person name="Fisher R.F."/>
            <person name="Gloux S."/>
            <person name="Godrie T."/>
            <person name="Goffeau A."/>
            <person name="Golding B."/>
            <person name="Gouzy J."/>
            <person name="Gurjal M."/>
            <person name="Hernandez-Lucas I."/>
            <person name="Hong A."/>
            <person name="Huizar L."/>
            <person name="Hyman R.W."/>
            <person name="Jones T."/>
            <person name="Kahn D."/>
            <person name="Kahn M.L."/>
            <person name="Kalman S."/>
            <person name="Keating D.H."/>
            <person name="Kiss E."/>
            <person name="Komp C."/>
            <person name="Lelaure V."/>
            <person name="Masuy D."/>
            <person name="Palm C."/>
            <person name="Peck M.C."/>
            <person name="Pohl T.M."/>
            <person name="Portetelle D."/>
            <person name="Purnelle B."/>
            <person name="Ramsperger U."/>
            <person name="Surzycki R."/>
            <person name="Thebault P."/>
            <person name="Vandenbol M."/>
            <person name="Vorhoelter F.J."/>
            <person name="Weidner S."/>
            <person name="Wells D.H."/>
            <person name="Wong K."/>
            <person name="Yeh K.-C."/>
            <person name="Batut J."/>
        </authorList>
    </citation>
    <scope>NUCLEOTIDE SEQUENCE [LARGE SCALE GENOMIC DNA]</scope>
    <source>
        <strain>1021</strain>
    </source>
</reference>
<proteinExistence type="predicted"/>
<gene>
    <name type="ordered locus">R00410</name>
    <name type="ORF">SMc01110</name>
</gene>
<accession>P0C5S2</accession>
<accession>Q52911</accession>
<feature type="chain" id="PRO_0000149774" description="Uncharacterized HTH-type transcriptional regulator R00410">
    <location>
        <begin position="1"/>
        <end position="139"/>
    </location>
</feature>
<feature type="domain" description="HTH cro/C1-type" evidence="1">
    <location>
        <begin position="19"/>
        <end position="73"/>
    </location>
</feature>
<feature type="DNA-binding region" description="H-T-H motif" evidence="1">
    <location>
        <begin position="30"/>
        <end position="49"/>
    </location>
</feature>
<dbReference type="EMBL" id="AL591688">
    <property type="protein sequence ID" value="CAC41847.1"/>
    <property type="molecule type" value="Genomic_DNA"/>
</dbReference>
<dbReference type="RefSeq" id="NP_384516.1">
    <property type="nucleotide sequence ID" value="NC_003047.1"/>
</dbReference>
<dbReference type="RefSeq" id="WP_003527670.1">
    <property type="nucleotide sequence ID" value="NC_003047.1"/>
</dbReference>
<dbReference type="SMR" id="P0C5S2"/>
<dbReference type="EnsemblBacteria" id="CAC41847">
    <property type="protein sequence ID" value="CAC41847"/>
    <property type="gene ID" value="SMc01110"/>
</dbReference>
<dbReference type="KEGG" id="sme:SMc01110"/>
<dbReference type="PATRIC" id="fig|266834.11.peg.1783"/>
<dbReference type="eggNOG" id="COG1396">
    <property type="taxonomic scope" value="Bacteria"/>
</dbReference>
<dbReference type="HOGENOM" id="CLU_066192_26_0_5"/>
<dbReference type="OrthoDB" id="9797172at2"/>
<dbReference type="Proteomes" id="UP000001976">
    <property type="component" value="Chromosome"/>
</dbReference>
<dbReference type="GO" id="GO:0003677">
    <property type="term" value="F:DNA binding"/>
    <property type="evidence" value="ECO:0007669"/>
    <property type="project" value="UniProtKB-KW"/>
</dbReference>
<dbReference type="CDD" id="cd00093">
    <property type="entry name" value="HTH_XRE"/>
    <property type="match status" value="1"/>
</dbReference>
<dbReference type="Gene3D" id="1.10.260.40">
    <property type="entry name" value="lambda repressor-like DNA-binding domains"/>
    <property type="match status" value="1"/>
</dbReference>
<dbReference type="InterPro" id="IPR001387">
    <property type="entry name" value="Cro/C1-type_HTH"/>
</dbReference>
<dbReference type="InterPro" id="IPR010982">
    <property type="entry name" value="Lambda_DNA-bd_dom_sf"/>
</dbReference>
<dbReference type="Pfam" id="PF01381">
    <property type="entry name" value="HTH_3"/>
    <property type="match status" value="1"/>
</dbReference>
<dbReference type="SMART" id="SM00530">
    <property type="entry name" value="HTH_XRE"/>
    <property type="match status" value="1"/>
</dbReference>
<dbReference type="SUPFAM" id="SSF47413">
    <property type="entry name" value="lambda repressor-like DNA-binding domains"/>
    <property type="match status" value="1"/>
</dbReference>
<dbReference type="PROSITE" id="PS50943">
    <property type="entry name" value="HTH_CROC1"/>
    <property type="match status" value="1"/>
</dbReference>